<evidence type="ECO:0000250" key="1"/>
<evidence type="ECO:0000255" key="2"/>
<evidence type="ECO:0000255" key="3">
    <source>
        <dbReference type="PROSITE-ProRule" id="PRU00720"/>
    </source>
</evidence>
<evidence type="ECO:0000255" key="4">
    <source>
        <dbReference type="PROSITE-ProRule" id="PRU01055"/>
    </source>
</evidence>
<evidence type="ECO:0000269" key="5">
    <source>
    </source>
</evidence>
<evidence type="ECO:0000269" key="6">
    <source>
    </source>
</evidence>
<evidence type="ECO:0000269" key="7">
    <source>
    </source>
</evidence>
<evidence type="ECO:0000269" key="8">
    <source>
    </source>
</evidence>
<evidence type="ECO:0000269" key="9">
    <source>
    </source>
</evidence>
<evidence type="ECO:0000269" key="10">
    <source>
    </source>
</evidence>
<evidence type="ECO:0000269" key="11">
    <source>
    </source>
</evidence>
<evidence type="ECO:0000269" key="12">
    <source>
    </source>
</evidence>
<evidence type="ECO:0000269" key="13">
    <source>
    </source>
</evidence>
<evidence type="ECO:0000269" key="14">
    <source>
    </source>
</evidence>
<evidence type="ECO:0000269" key="15">
    <source>
    </source>
</evidence>
<evidence type="ECO:0000269" key="16">
    <source>
    </source>
</evidence>
<evidence type="ECO:0000269" key="17">
    <source>
    </source>
</evidence>
<evidence type="ECO:0000269" key="18">
    <source>
    </source>
</evidence>
<evidence type="ECO:0000269" key="19">
    <source>
    </source>
</evidence>
<evidence type="ECO:0000269" key="20">
    <source>
    </source>
</evidence>
<evidence type="ECO:0000269" key="21">
    <source>
    </source>
</evidence>
<evidence type="ECO:0000269" key="22">
    <source>
    </source>
</evidence>
<evidence type="ECO:0000269" key="23">
    <source>
    </source>
</evidence>
<evidence type="ECO:0000269" key="24">
    <source>
    </source>
</evidence>
<evidence type="ECO:0000269" key="25">
    <source>
    </source>
</evidence>
<evidence type="ECO:0000269" key="26">
    <source>
    </source>
</evidence>
<evidence type="ECO:0000269" key="27">
    <source>
    </source>
</evidence>
<evidence type="ECO:0000269" key="28">
    <source>
    </source>
</evidence>
<evidence type="ECO:0000269" key="29">
    <source>
    </source>
</evidence>
<evidence type="ECO:0000269" key="30">
    <source>
    </source>
</evidence>
<evidence type="ECO:0000269" key="31">
    <source>
    </source>
</evidence>
<evidence type="ECO:0000269" key="32">
    <source>
    </source>
</evidence>
<evidence type="ECO:0000269" key="33">
    <source>
    </source>
</evidence>
<evidence type="ECO:0000269" key="34">
    <source>
    </source>
</evidence>
<evidence type="ECO:0000269" key="35">
    <source ref="10"/>
</evidence>
<evidence type="ECO:0000269" key="36">
    <source ref="9"/>
</evidence>
<evidence type="ECO:0000303" key="37">
    <source>
    </source>
</evidence>
<evidence type="ECO:0000305" key="38"/>
<evidence type="ECO:0007829" key="39">
    <source>
        <dbReference type="PDB" id="3LJB"/>
    </source>
</evidence>
<evidence type="ECO:0007829" key="40">
    <source>
        <dbReference type="PDB" id="3SZR"/>
    </source>
</evidence>
<evidence type="ECO:0007829" key="41">
    <source>
        <dbReference type="PDB" id="4P4S"/>
    </source>
</evidence>
<evidence type="ECO:0007829" key="42">
    <source>
        <dbReference type="PDB" id="4P4U"/>
    </source>
</evidence>
<evidence type="ECO:0007829" key="43">
    <source>
        <dbReference type="PDB" id="5GTM"/>
    </source>
</evidence>
<comment type="function">
    <text evidence="7 8 10 11 12 14 16 17 18 20 21 27 29">Interferon-induced dynamin-like GTPase with antiviral activity against a wide range of RNA viruses and some DNA viruses. Its target viruses include negative-stranded RNA viruses and HBV through binding and inactivation of their ribonucleocapsid. May also antagonize reoviridae and asfarviridae replication. Inhibits thogoto virus (THOV) replication by preventing the nuclear import of viral nucleocapsids. Inhibits La Crosse virus (LACV) replication by sequestering viral nucleoprotein in perinuclear complexes, preventing genome amplification, budding, and egress. Inhibits influenza A virus (IAV) replication by decreasing or delaying NP synthesis and by blocking endocytic traffic of incoming virus particles. Enhances ER stress-mediated cell death after influenza virus infection. May regulate the calcium channel activity of TRPCs.</text>
</comment>
<comment type="subunit">
    <text evidence="1 7 11 14 17 22 26 27 28 29 34">Homotetramer. Oligomerizes into multimeric filamentous or ring-like structures by virtue of its stalk domain. Oligomerization is critical for GTPase activity, protein stability, and recognition of viral target structures. Interacts with TRPC1, TRPC3, TRPC4, TRPC5, TRPC6 and TRPC7. Interacts with HSPA5. Interacts with DDX39A and DDX39B. Interacts with TUBB/TUBB5 (By similarity). The GTP-bound form interacts (via C-terminus) with THOV P5 protein. The GTP-bound form interacts with LACV protein N. Interacts with CCHFV protein N.</text>
</comment>
<comment type="interaction">
    <interactant intactId="EBI-929476">
        <id>P20591</id>
    </interactant>
    <interactant intactId="EBI-719257">
        <id>Q9Y276</id>
        <label>BCS1L</label>
    </interactant>
    <organismsDiffer>false</organismsDiffer>
    <experiments>2</experiments>
</comment>
<comment type="interaction">
    <interactant intactId="EBI-929476">
        <id>P20591</id>
    </interactant>
    <interactant intactId="EBI-1047244">
        <id>Q9H9S4</id>
        <label>CAB39L</label>
    </interactant>
    <organismsDiffer>false</organismsDiffer>
    <experiments>3</experiments>
</comment>
<comment type="interaction">
    <interactant intactId="EBI-929476">
        <id>P20591</id>
    </interactant>
    <interactant intactId="EBI-354956">
        <id>Q08380</id>
        <label>LGALS3BP</label>
    </interactant>
    <organismsDiffer>false</organismsDiffer>
    <experiments>2</experiments>
</comment>
<comment type="interaction">
    <interactant intactId="EBI-929476">
        <id>P20591</id>
    </interactant>
    <interactant intactId="EBI-11987923">
        <id>P59942</id>
        <label>MCCD1</label>
    </interactant>
    <organismsDiffer>false</organismsDiffer>
    <experiments>6</experiments>
</comment>
<comment type="interaction">
    <interactant intactId="EBI-929476">
        <id>P20591</id>
    </interactant>
    <interactant intactId="EBI-929476">
        <id>P20591</id>
        <label>MX1</label>
    </interactant>
    <organismsDiffer>false</organismsDiffer>
    <experiments>13</experiments>
</comment>
<comment type="interaction">
    <interactant intactId="EBI-929476">
        <id>P20591</id>
    </interactant>
    <interactant intactId="EBI-348567">
        <id>O75928-2</id>
        <label>PIAS2</label>
    </interactant>
    <organismsDiffer>false</organismsDiffer>
    <experiments>3</experiments>
</comment>
<comment type="interaction">
    <interactant intactId="EBI-929476">
        <id>P20591</id>
    </interactant>
    <interactant intactId="EBI-747107">
        <id>Q8IUQ4</id>
        <label>SIAH1</label>
    </interactant>
    <organismsDiffer>false</organismsDiffer>
    <experiments>3</experiments>
</comment>
<comment type="interaction">
    <interactant intactId="EBI-929476">
        <id>P20591</id>
    </interactant>
    <interactant intactId="EBI-520807">
        <id>Q13507</id>
        <label>TRPC3</label>
    </interactant>
    <organismsDiffer>false</organismsDiffer>
    <experiments>2</experiments>
</comment>
<comment type="interaction">
    <interactant intactId="EBI-929476">
        <id>P20591</id>
    </interactant>
    <interactant intactId="EBI-929504">
        <id>Q9UBN4</id>
        <label>TRPC4</label>
    </interactant>
    <organismsDiffer>false</organismsDiffer>
    <experiments>2</experiments>
</comment>
<comment type="interaction">
    <interactant intactId="EBI-929476">
        <id>P20591</id>
    </interactant>
    <interactant intactId="EBI-929362">
        <id>Q9Y210</id>
        <label>TRPC6</label>
    </interactant>
    <organismsDiffer>false</organismsDiffer>
    <experiments>4</experiments>
</comment>
<comment type="subcellular location">
    <subcellularLocation>
        <location evidence="7 26 29 33">Cytoplasm</location>
    </subcellularLocation>
    <subcellularLocation>
        <location evidence="12 17 29">Endoplasmic reticulum membrane</location>
        <topology evidence="17">Peripheral membrane protein</topology>
        <orientation>Cytoplasmic side</orientation>
    </subcellularLocation>
    <subcellularLocation>
        <location evidence="11">Cytoplasm</location>
        <location evidence="11">Perinuclear region</location>
    </subcellularLocation>
    <text evidence="11 27">Binds preferentially to negatively charged phospholipids (PubMed:21900240). Colocalizes with CCHFV protein N in the perinuclear region (PubMed:15047845).</text>
</comment>
<comment type="subcellular location">
    <molecule>Isoform 2</molecule>
    <subcellularLocation>
        <location evidence="24">Cytoplasm</location>
    </subcellularLocation>
    <subcellularLocation>
        <location evidence="24">Nucleus</location>
    </subcellularLocation>
    <text evidence="24">Translocates into the nuclei of HSV-1 infected cells (PubMed:20603636).</text>
</comment>
<comment type="alternative products">
    <event type="alternative splicing"/>
    <isoform>
        <id>P20591-1</id>
        <name>1</name>
        <sequence type="displayed"/>
    </isoform>
    <isoform>
        <id>P20591-2</id>
        <name>2</name>
        <name>56-kda</name>
        <name>varMxA</name>
        <sequence type="described" ref="VSP_042904"/>
    </isoform>
</comment>
<comment type="induction">
    <text evidence="19">By type I and type III interferons. Isoform 2 is induced by HSV-1.</text>
</comment>
<comment type="domain">
    <text evidence="23">The C-terminal GTPase effector domain (GED) is involved in oligomerization and viral target recognition.</text>
</comment>
<comment type="domain">
    <text evidence="23">The middle domain mediates self-assembly and oligomerization.</text>
</comment>
<comment type="PTM">
    <text evidence="15">ISGylated.</text>
</comment>
<comment type="similarity">
    <text evidence="4">Belongs to the TRAFAC class dynamin-like GTPase superfamily. Dynamin/Fzo/YdjA family.</text>
</comment>
<organism>
    <name type="scientific">Homo sapiens</name>
    <name type="common">Human</name>
    <dbReference type="NCBI Taxonomy" id="9606"/>
    <lineage>
        <taxon>Eukaryota</taxon>
        <taxon>Metazoa</taxon>
        <taxon>Chordata</taxon>
        <taxon>Craniata</taxon>
        <taxon>Vertebrata</taxon>
        <taxon>Euteleostomi</taxon>
        <taxon>Mammalia</taxon>
        <taxon>Eutheria</taxon>
        <taxon>Euarchontoglires</taxon>
        <taxon>Primates</taxon>
        <taxon>Haplorrhini</taxon>
        <taxon>Catarrhini</taxon>
        <taxon>Hominidae</taxon>
        <taxon>Homo</taxon>
    </lineage>
</organism>
<protein>
    <recommendedName>
        <fullName>Interferon-induced GTP-binding protein Mx1</fullName>
    </recommendedName>
    <alternativeName>
        <fullName>Interferon-induced protein p78</fullName>
        <shortName>IFI-78K</shortName>
    </alternativeName>
    <alternativeName>
        <fullName>Interferon-regulated resistance GTP-binding protein MxA</fullName>
    </alternativeName>
    <alternativeName>
        <fullName>Myxoma resistance protein 1</fullName>
    </alternativeName>
    <alternativeName>
        <fullName>Myxovirus resistance protein 1</fullName>
    </alternativeName>
    <component>
        <recommendedName>
            <fullName>Interferon-induced GTP-binding protein Mx1, N-terminally processed</fullName>
        </recommendedName>
    </component>
</protein>
<accession>P20591</accession>
<accession>B2RDA5</accession>
<accession>B3KU10</accession>
<accession>C9IYV7</accession>
<accession>C9J8D6</accession>
<accession>C9JN19</accession>
<accession>C9JN88</accession>
<accession>C9JUL1</accession>
<accession>C9JZS6</accession>
<accession>D3DSI8</accession>
<accession>Q86YP5</accession>
<accession>Q96CI3</accession>
<gene>
    <name type="primary">MX1</name>
</gene>
<sequence>MVVSEVDIAKADPAAASHPLLLNGDATVAQKNPGSVAENNLCSQYEEKVRPCIDLIDSLRALGVEQDLALPAIAVIGDQSSGKSSVLEALSGVALPRGSGIVTRCPLVLKLKKLVNEDKWRGKVSYQDYEIEISDASEVEKEINKAQNAIAGEGMGISHELITLEISSRDVPDLTLIDLPGITRVAVGNQPADIGYKIKTLIKKYIQRQETISLVVVPSNVDIATTEALSMAQEVDPEGDRTIGILTKPDLVDKGTEDKVVDVVRNLVFHLKKGYMIVKCRGQQEIQDQLSLSEALQREKIFFENHPYFRDLLEEGKATVPCLAEKLTSELITHICKSLPLLENQIKETHQRITEELQKYGVDIPEDENEKMFFLIDKVNAFNQDITALMQGEETVGEEDIRLFTRLRHEFHKWSTIIENNFQEGHKILSRKIQKFENQYRGRELPGFVNYRTFETIVKQQIKALEEPAVDMLHTVTDMVRLAFTDVSIKNFEEFFNLHRTAKSKIEDIRAEQEREGEKLIRLHFQMEQIVYCQDQVYRGALQKVREKELEEEKKKKSWDFGAFQSSSATDSSMEEIFQHLMAYHQEASKRISSHIPLIIQFFMLQTYGQQLQKAMLQLLQDKDTYSWLLKERSDTSDKRKFLKERLARLTQARRRLAQFPG</sequence>
<proteinExistence type="evidence at protein level"/>
<keyword id="KW-0002">3D-structure</keyword>
<keyword id="KW-0007">Acetylation</keyword>
<keyword id="KW-0025">Alternative splicing</keyword>
<keyword id="KW-0051">Antiviral defense</keyword>
<keyword id="KW-0963">Cytoplasm</keyword>
<keyword id="KW-0903">Direct protein sequencing</keyword>
<keyword id="KW-0256">Endoplasmic reticulum</keyword>
<keyword id="KW-0342">GTP-binding</keyword>
<keyword id="KW-0391">Immunity</keyword>
<keyword id="KW-0399">Innate immunity</keyword>
<keyword id="KW-0472">Membrane</keyword>
<keyword id="KW-0547">Nucleotide-binding</keyword>
<keyword id="KW-0539">Nucleus</keyword>
<keyword id="KW-1267">Proteomics identification</keyword>
<keyword id="KW-1185">Reference proteome</keyword>
<keyword id="KW-0832">Ubl conjugation</keyword>
<dbReference type="EMBL" id="M30817">
    <property type="protein sequence ID" value="AAA36337.1"/>
    <property type="molecule type" value="mRNA"/>
</dbReference>
<dbReference type="EMBL" id="M33882">
    <property type="protein sequence ID" value="AAA36458.1"/>
    <property type="molecule type" value="mRNA"/>
</dbReference>
<dbReference type="EMBL" id="AF135187">
    <property type="protein sequence ID" value="AAD43063.1"/>
    <property type="molecule type" value="Genomic_DNA"/>
</dbReference>
<dbReference type="EMBL" id="AK096355">
    <property type="protein sequence ID" value="BAG53272.1"/>
    <property type="molecule type" value="mRNA"/>
</dbReference>
<dbReference type="EMBL" id="AK315465">
    <property type="protein sequence ID" value="BAG37852.1"/>
    <property type="molecule type" value="mRNA"/>
</dbReference>
<dbReference type="EMBL" id="AL163285">
    <property type="protein sequence ID" value="CAB90556.1"/>
    <property type="molecule type" value="Genomic_DNA"/>
</dbReference>
<dbReference type="EMBL" id="AL773577">
    <property type="status" value="NOT_ANNOTATED_CDS"/>
    <property type="molecule type" value="Genomic_DNA"/>
</dbReference>
<dbReference type="EMBL" id="AL773578">
    <property type="status" value="NOT_ANNOTATED_CDS"/>
    <property type="molecule type" value="Genomic_DNA"/>
</dbReference>
<dbReference type="EMBL" id="AP001610">
    <property type="status" value="NOT_ANNOTATED_CDS"/>
    <property type="molecule type" value="Genomic_DNA"/>
</dbReference>
<dbReference type="EMBL" id="CH471079">
    <property type="protein sequence ID" value="EAX09600.1"/>
    <property type="molecule type" value="Genomic_DNA"/>
</dbReference>
<dbReference type="EMBL" id="CH471079">
    <property type="protein sequence ID" value="EAX09601.1"/>
    <property type="molecule type" value="Genomic_DNA"/>
</dbReference>
<dbReference type="EMBL" id="CH471079">
    <property type="protein sequence ID" value="EAX09602.1"/>
    <property type="molecule type" value="Genomic_DNA"/>
</dbReference>
<dbReference type="EMBL" id="CH471079">
    <property type="protein sequence ID" value="EAX09603.1"/>
    <property type="molecule type" value="Genomic_DNA"/>
</dbReference>
<dbReference type="EMBL" id="CH471079">
    <property type="protein sequence ID" value="EAX09604.1"/>
    <property type="molecule type" value="Genomic_DNA"/>
</dbReference>
<dbReference type="EMBL" id="BC014222">
    <property type="protein sequence ID" value="AAH14222.2"/>
    <property type="molecule type" value="mRNA"/>
</dbReference>
<dbReference type="EMBL" id="BC032602">
    <property type="protein sequence ID" value="AAH32602.1"/>
    <property type="molecule type" value="mRNA"/>
</dbReference>
<dbReference type="EMBL" id="AY186254">
    <property type="protein sequence ID" value="AAO31807.1"/>
    <property type="molecule type" value="mRNA"/>
</dbReference>
<dbReference type="CCDS" id="CCDS13673.1">
    <molecule id="P20591-1"/>
</dbReference>
<dbReference type="CCDS" id="CCDS74796.1">
    <molecule id="P20591-2"/>
</dbReference>
<dbReference type="PIR" id="A33481">
    <property type="entry name" value="A33481"/>
</dbReference>
<dbReference type="RefSeq" id="NP_001138397.1">
    <molecule id="P20591-1"/>
    <property type="nucleotide sequence ID" value="NM_001144925.2"/>
</dbReference>
<dbReference type="RefSeq" id="NP_001171517.1">
    <molecule id="P20591-1"/>
    <property type="nucleotide sequence ID" value="NM_001178046.3"/>
</dbReference>
<dbReference type="RefSeq" id="NP_001269849.1">
    <molecule id="P20591-2"/>
    <property type="nucleotide sequence ID" value="NM_001282920.1"/>
</dbReference>
<dbReference type="RefSeq" id="NP_002453.2">
    <molecule id="P20591-1"/>
    <property type="nucleotide sequence ID" value="NM_002462.5"/>
</dbReference>
<dbReference type="RefSeq" id="XP_005261035.1">
    <molecule id="P20591-1"/>
    <property type="nucleotide sequence ID" value="XM_005260978.5"/>
</dbReference>
<dbReference type="RefSeq" id="XP_005261036.1">
    <property type="nucleotide sequence ID" value="XM_005260979.2"/>
</dbReference>
<dbReference type="RefSeq" id="XP_005261037.1">
    <molecule id="P20591-1"/>
    <property type="nucleotide sequence ID" value="XM_005260980.3"/>
</dbReference>
<dbReference type="RefSeq" id="XP_005261038.1">
    <molecule id="P20591-1"/>
    <property type="nucleotide sequence ID" value="XM_005260981.3"/>
</dbReference>
<dbReference type="RefSeq" id="XP_005261039.1">
    <molecule id="P20591-1"/>
    <property type="nucleotide sequence ID" value="XM_005260982.3"/>
</dbReference>
<dbReference type="RefSeq" id="XP_011527870.1">
    <molecule id="P20591-1"/>
    <property type="nucleotide sequence ID" value="XM_011529568.3"/>
</dbReference>
<dbReference type="RefSeq" id="XP_016883838.1">
    <molecule id="P20591-1"/>
    <property type="nucleotide sequence ID" value="XM_017028349.3"/>
</dbReference>
<dbReference type="RefSeq" id="XP_016883839.1">
    <property type="nucleotide sequence ID" value="XM_017028350.1"/>
</dbReference>
<dbReference type="RefSeq" id="XP_047296721.1">
    <molecule id="P20591-1"/>
    <property type="nucleotide sequence ID" value="XM_047440765.1"/>
</dbReference>
<dbReference type="RefSeq" id="XP_047296722.1">
    <molecule id="P20591-1"/>
    <property type="nucleotide sequence ID" value="XM_047440766.1"/>
</dbReference>
<dbReference type="RefSeq" id="XP_047296723.1">
    <molecule id="P20591-1"/>
    <property type="nucleotide sequence ID" value="XM_047440767.1"/>
</dbReference>
<dbReference type="RefSeq" id="XP_047296724.1">
    <molecule id="P20591-1"/>
    <property type="nucleotide sequence ID" value="XM_047440768.1"/>
</dbReference>
<dbReference type="RefSeq" id="XP_047296725.1">
    <molecule id="P20591-1"/>
    <property type="nucleotide sequence ID" value="XM_047440769.1"/>
</dbReference>
<dbReference type="RefSeq" id="XP_047296726.1">
    <molecule id="P20591-1"/>
    <property type="nucleotide sequence ID" value="XM_047440770.1"/>
</dbReference>
<dbReference type="PDB" id="3LJB">
    <property type="method" value="X-ray"/>
    <property type="resolution" value="2.40 A"/>
    <property type="chains" value="A/B=366-636"/>
</dbReference>
<dbReference type="PDB" id="3SZR">
    <property type="method" value="X-ray"/>
    <property type="resolution" value="3.50 A"/>
    <property type="chains" value="A=33-662"/>
</dbReference>
<dbReference type="PDB" id="3ZYS">
    <property type="method" value="EM"/>
    <property type="resolution" value="12.20 A"/>
    <property type="chains" value="B/E=1-662"/>
</dbReference>
<dbReference type="PDB" id="4P4S">
    <property type="method" value="X-ray"/>
    <property type="resolution" value="3.30 A"/>
    <property type="chains" value="A=70-342, B=43-662"/>
</dbReference>
<dbReference type="PDB" id="4P4T">
    <property type="method" value="X-ray"/>
    <property type="resolution" value="2.30 A"/>
    <property type="chains" value="A=37-366, A=637-662"/>
</dbReference>
<dbReference type="PDB" id="4P4U">
    <property type="method" value="X-ray"/>
    <property type="resolution" value="1.90 A"/>
    <property type="chains" value="A=37-364, A=632-661"/>
</dbReference>
<dbReference type="PDB" id="5GTM">
    <property type="method" value="X-ray"/>
    <property type="resolution" value="2.90 A"/>
    <property type="chains" value="A/B=33-662"/>
</dbReference>
<dbReference type="PDBsum" id="3LJB"/>
<dbReference type="PDBsum" id="3SZR"/>
<dbReference type="PDBsum" id="3ZYS"/>
<dbReference type="PDBsum" id="4P4S"/>
<dbReference type="PDBsum" id="4P4T"/>
<dbReference type="PDBsum" id="4P4U"/>
<dbReference type="PDBsum" id="5GTM"/>
<dbReference type="EMDB" id="EMD-1949"/>
<dbReference type="SMR" id="P20591"/>
<dbReference type="BioGRID" id="110684">
    <property type="interactions" value="55"/>
</dbReference>
<dbReference type="DIP" id="DIP-35694N"/>
<dbReference type="FunCoup" id="P20591">
    <property type="interactions" value="280"/>
</dbReference>
<dbReference type="IntAct" id="P20591">
    <property type="interactions" value="28"/>
</dbReference>
<dbReference type="MINT" id="P20591"/>
<dbReference type="STRING" id="9606.ENSP00000381601"/>
<dbReference type="iPTMnet" id="P20591"/>
<dbReference type="PhosphoSitePlus" id="P20591"/>
<dbReference type="SwissPalm" id="P20591"/>
<dbReference type="BioMuta" id="MX1"/>
<dbReference type="DMDM" id="251757499"/>
<dbReference type="jPOST" id="P20591"/>
<dbReference type="MassIVE" id="P20591"/>
<dbReference type="PaxDb" id="9606-ENSP00000381601"/>
<dbReference type="PeptideAtlas" id="P20591"/>
<dbReference type="ProteomicsDB" id="53763">
    <molecule id="P20591-1"/>
</dbReference>
<dbReference type="ProteomicsDB" id="53764">
    <molecule id="P20591-2"/>
</dbReference>
<dbReference type="Antibodypedia" id="23580">
    <property type="antibodies" value="544 antibodies from 34 providers"/>
</dbReference>
<dbReference type="DNASU" id="4599"/>
<dbReference type="Ensembl" id="ENST00000398598.8">
    <molecule id="P20591-1"/>
    <property type="protein sequence ID" value="ENSP00000381599.3"/>
    <property type="gene ID" value="ENSG00000157601.15"/>
</dbReference>
<dbReference type="Ensembl" id="ENST00000398600.6">
    <molecule id="P20591-1"/>
    <property type="protein sequence ID" value="ENSP00000381601.2"/>
    <property type="gene ID" value="ENSG00000157601.15"/>
</dbReference>
<dbReference type="Ensembl" id="ENST00000413778.6">
    <molecule id="P20591-1"/>
    <property type="protein sequence ID" value="ENSP00000408498.2"/>
    <property type="gene ID" value="ENSG00000157601.15"/>
</dbReference>
<dbReference type="Ensembl" id="ENST00000417963.6">
    <molecule id="P20591-1"/>
    <property type="protein sequence ID" value="ENSP00000402215.2"/>
    <property type="gene ID" value="ENSG00000157601.15"/>
</dbReference>
<dbReference type="Ensembl" id="ENST00000419044.6">
    <molecule id="P20591-1"/>
    <property type="protein sequence ID" value="ENSP00000392151.2"/>
    <property type="gene ID" value="ENSG00000157601.15"/>
</dbReference>
<dbReference type="Ensembl" id="ENST00000455164.6">
    <molecule id="P20591-1"/>
    <property type="protein sequence ID" value="ENSP00000410523.2"/>
    <property type="gene ID" value="ENSG00000157601.15"/>
</dbReference>
<dbReference type="Ensembl" id="ENST00000619682.1">
    <molecule id="P20591-2"/>
    <property type="protein sequence ID" value="ENSP00000478441.1"/>
    <property type="gene ID" value="ENSG00000157601.15"/>
</dbReference>
<dbReference type="Ensembl" id="ENST00000679445.1">
    <molecule id="P20591-1"/>
    <property type="protein sequence ID" value="ENSP00000505630.1"/>
    <property type="gene ID" value="ENSG00000157601.15"/>
</dbReference>
<dbReference type="Ensembl" id="ENST00000679464.1">
    <molecule id="P20591-1"/>
    <property type="protein sequence ID" value="ENSP00000505874.1"/>
    <property type="gene ID" value="ENSG00000157601.15"/>
</dbReference>
<dbReference type="Ensembl" id="ENST00000679543.1">
    <molecule id="P20591-1"/>
    <property type="protein sequence ID" value="ENSP00000505047.1"/>
    <property type="gene ID" value="ENSG00000157601.15"/>
</dbReference>
<dbReference type="Ensembl" id="ENST00000679626.1">
    <molecule id="P20591-1"/>
    <property type="protein sequence ID" value="ENSP00000506481.1"/>
    <property type="gene ID" value="ENSG00000157601.15"/>
</dbReference>
<dbReference type="Ensembl" id="ENST00000679705.1">
    <molecule id="P20591-1"/>
    <property type="protein sequence ID" value="ENSP00000506372.1"/>
    <property type="gene ID" value="ENSG00000157601.15"/>
</dbReference>
<dbReference type="Ensembl" id="ENST00000679911.1">
    <molecule id="P20591-1"/>
    <property type="protein sequence ID" value="ENSP00000505189.1"/>
    <property type="gene ID" value="ENSG00000157601.15"/>
</dbReference>
<dbReference type="Ensembl" id="ENST00000680176.1">
    <molecule id="P20591-1"/>
    <property type="protein sequence ID" value="ENSP00000506270.1"/>
    <property type="gene ID" value="ENSG00000157601.15"/>
</dbReference>
<dbReference type="Ensembl" id="ENST00000680182.1">
    <molecule id="P20591-1"/>
    <property type="protein sequence ID" value="ENSP00000506395.1"/>
    <property type="gene ID" value="ENSG00000157601.15"/>
</dbReference>
<dbReference type="Ensembl" id="ENST00000680347.1">
    <molecule id="P20591-1"/>
    <property type="protein sequence ID" value="ENSP00000506183.1"/>
    <property type="gene ID" value="ENSG00000157601.15"/>
</dbReference>
<dbReference type="Ensembl" id="ENST00000680364.1">
    <molecule id="P20591-1"/>
    <property type="protein sequence ID" value="ENSP00000505781.1"/>
    <property type="gene ID" value="ENSG00000157601.15"/>
</dbReference>
<dbReference type="Ensembl" id="ENST00000680536.1">
    <molecule id="P20591-1"/>
    <property type="protein sequence ID" value="ENSP00000505029.1"/>
    <property type="gene ID" value="ENSG00000157601.15"/>
</dbReference>
<dbReference type="Ensembl" id="ENST00000680629.1">
    <molecule id="P20591-1"/>
    <property type="protein sequence ID" value="ENSP00000506047.1"/>
    <property type="gene ID" value="ENSG00000157601.15"/>
</dbReference>
<dbReference type="Ensembl" id="ENST00000680760.1">
    <molecule id="P20591-1"/>
    <property type="protein sequence ID" value="ENSP00000506199.1"/>
    <property type="gene ID" value="ENSG00000157601.15"/>
</dbReference>
<dbReference type="Ensembl" id="ENST00000680776.1">
    <molecule id="P20591-1"/>
    <property type="protein sequence ID" value="ENSP00000506512.1"/>
    <property type="gene ID" value="ENSG00000157601.15"/>
</dbReference>
<dbReference type="Ensembl" id="ENST00000681039.1">
    <molecule id="P20591-1"/>
    <property type="protein sequence ID" value="ENSP00000506220.1"/>
    <property type="gene ID" value="ENSG00000157601.15"/>
</dbReference>
<dbReference type="Ensembl" id="ENST00000681191.1">
    <molecule id="P20591-1"/>
    <property type="protein sequence ID" value="ENSP00000505657.1"/>
    <property type="gene ID" value="ENSG00000157601.15"/>
</dbReference>
<dbReference type="Ensembl" id="ENST00000681266.1">
    <molecule id="P20591-1"/>
    <property type="protein sequence ID" value="ENSP00000506348.1"/>
    <property type="gene ID" value="ENSG00000157601.15"/>
</dbReference>
<dbReference type="Ensembl" id="ENST00000681415.1">
    <molecule id="P20591-1"/>
    <property type="protein sequence ID" value="ENSP00000506062.1"/>
    <property type="gene ID" value="ENSG00000157601.15"/>
</dbReference>
<dbReference type="Ensembl" id="ENST00000681607.1">
    <molecule id="P20591-1"/>
    <property type="protein sequence ID" value="ENSP00000505489.1"/>
    <property type="gene ID" value="ENSG00000157601.15"/>
</dbReference>
<dbReference type="Ensembl" id="ENST00000681671.1">
    <molecule id="P20591-1"/>
    <property type="protein sequence ID" value="ENSP00000506712.1"/>
    <property type="gene ID" value="ENSG00000157601.15"/>
</dbReference>
<dbReference type="Ensembl" id="ENST00000681849.1">
    <molecule id="P20591-1"/>
    <property type="protein sequence ID" value="ENSP00000505051.1"/>
    <property type="gene ID" value="ENSG00000157601.15"/>
</dbReference>
<dbReference type="Ensembl" id="ENST00000681857.1">
    <molecule id="P20591-1"/>
    <property type="protein sequence ID" value="ENSP00000505669.1"/>
    <property type="gene ID" value="ENSG00000157601.15"/>
</dbReference>
<dbReference type="Ensembl" id="ENST00000681867.1">
    <molecule id="P20591-1"/>
    <property type="protein sequence ID" value="ENSP00000506690.1"/>
    <property type="gene ID" value="ENSG00000157601.15"/>
</dbReference>
<dbReference type="Ensembl" id="ENST00000681896.1">
    <molecule id="P20591-1"/>
    <property type="protein sequence ID" value="ENSP00000505457.1"/>
    <property type="gene ID" value="ENSG00000157601.15"/>
</dbReference>
<dbReference type="GeneID" id="4599"/>
<dbReference type="KEGG" id="hsa:4599"/>
<dbReference type="MANE-Select" id="ENST00000398598.8">
    <property type="protein sequence ID" value="ENSP00000381599.3"/>
    <property type="RefSeq nucleotide sequence ID" value="NM_002462.5"/>
    <property type="RefSeq protein sequence ID" value="NP_002453.2"/>
</dbReference>
<dbReference type="UCSC" id="uc002yzh.5">
    <molecule id="P20591-1"/>
    <property type="organism name" value="human"/>
</dbReference>
<dbReference type="AGR" id="HGNC:7532"/>
<dbReference type="CTD" id="4599"/>
<dbReference type="DisGeNET" id="4599"/>
<dbReference type="GeneCards" id="MX1"/>
<dbReference type="HGNC" id="HGNC:7532">
    <property type="gene designation" value="MX1"/>
</dbReference>
<dbReference type="HPA" id="ENSG00000157601">
    <property type="expression patterns" value="Tissue enhanced (salivary)"/>
</dbReference>
<dbReference type="MIM" id="147150">
    <property type="type" value="gene"/>
</dbReference>
<dbReference type="neXtProt" id="NX_P20591"/>
<dbReference type="OpenTargets" id="ENSG00000157601"/>
<dbReference type="PharmGKB" id="PA31333"/>
<dbReference type="VEuPathDB" id="HostDB:ENSG00000157601"/>
<dbReference type="eggNOG" id="KOG0446">
    <property type="taxonomic scope" value="Eukaryota"/>
</dbReference>
<dbReference type="GeneTree" id="ENSGT00940000155686"/>
<dbReference type="HOGENOM" id="CLU_008964_8_0_1"/>
<dbReference type="InParanoid" id="P20591"/>
<dbReference type="OMA" id="EFHKWSA"/>
<dbReference type="OrthoDB" id="5061070at2759"/>
<dbReference type="PAN-GO" id="P20591">
    <property type="GO annotations" value="7 GO annotations based on evolutionary models"/>
</dbReference>
<dbReference type="PhylomeDB" id="P20591"/>
<dbReference type="TreeFam" id="TF331484"/>
<dbReference type="BRENDA" id="3.6.5.5">
    <property type="organism ID" value="2681"/>
</dbReference>
<dbReference type="PathwayCommons" id="P20591"/>
<dbReference type="Reactome" id="R-HSA-1169408">
    <property type="pathway name" value="ISG15 antiviral mechanism"/>
</dbReference>
<dbReference type="Reactome" id="R-HSA-909733">
    <property type="pathway name" value="Interferon alpha/beta signaling"/>
</dbReference>
<dbReference type="SignaLink" id="P20591"/>
<dbReference type="SIGNOR" id="P20591"/>
<dbReference type="BioGRID-ORCS" id="4599">
    <property type="hits" value="15 hits in 1158 CRISPR screens"/>
</dbReference>
<dbReference type="CD-CODE" id="348497F3">
    <property type="entry name" value="Synthetic Condensate 000321"/>
</dbReference>
<dbReference type="ChiTaRS" id="MX1">
    <property type="organism name" value="human"/>
</dbReference>
<dbReference type="EvolutionaryTrace" id="P20591"/>
<dbReference type="GeneWiki" id="MX1"/>
<dbReference type="GenomeRNAi" id="4599"/>
<dbReference type="Pharos" id="P20591">
    <property type="development level" value="Tbio"/>
</dbReference>
<dbReference type="PRO" id="PR:P20591"/>
<dbReference type="Proteomes" id="UP000005640">
    <property type="component" value="Chromosome 21"/>
</dbReference>
<dbReference type="RNAct" id="P20591">
    <property type="molecule type" value="protein"/>
</dbReference>
<dbReference type="Bgee" id="ENSG00000157601">
    <property type="expression patterns" value="Expressed in trigeminal ganglion and 188 other cell types or tissues"/>
</dbReference>
<dbReference type="ExpressionAtlas" id="P20591">
    <property type="expression patterns" value="baseline and differential"/>
</dbReference>
<dbReference type="GO" id="GO:0005737">
    <property type="term" value="C:cytoplasm"/>
    <property type="evidence" value="ECO:0000314"/>
    <property type="project" value="UniProtKB"/>
</dbReference>
<dbReference type="GO" id="GO:0005829">
    <property type="term" value="C:cytosol"/>
    <property type="evidence" value="ECO:0000314"/>
    <property type="project" value="HPA"/>
</dbReference>
<dbReference type="GO" id="GO:0005789">
    <property type="term" value="C:endoplasmic reticulum membrane"/>
    <property type="evidence" value="ECO:0007669"/>
    <property type="project" value="UniProtKB-SubCell"/>
</dbReference>
<dbReference type="GO" id="GO:0005874">
    <property type="term" value="C:microtubule"/>
    <property type="evidence" value="ECO:0000318"/>
    <property type="project" value="GO_Central"/>
</dbReference>
<dbReference type="GO" id="GO:0031965">
    <property type="term" value="C:nuclear membrane"/>
    <property type="evidence" value="ECO:0000314"/>
    <property type="project" value="HPA"/>
</dbReference>
<dbReference type="GO" id="GO:0005634">
    <property type="term" value="C:nucleus"/>
    <property type="evidence" value="ECO:0000318"/>
    <property type="project" value="GO_Central"/>
</dbReference>
<dbReference type="GO" id="GO:0048471">
    <property type="term" value="C:perinuclear region of cytoplasm"/>
    <property type="evidence" value="ECO:0000314"/>
    <property type="project" value="UniProtKB"/>
</dbReference>
<dbReference type="GO" id="GO:0005886">
    <property type="term" value="C:plasma membrane"/>
    <property type="evidence" value="ECO:0000318"/>
    <property type="project" value="GO_Central"/>
</dbReference>
<dbReference type="GO" id="GO:0098793">
    <property type="term" value="C:presynapse"/>
    <property type="evidence" value="ECO:0007669"/>
    <property type="project" value="GOC"/>
</dbReference>
<dbReference type="GO" id="GO:0045202">
    <property type="term" value="C:synapse"/>
    <property type="evidence" value="ECO:0000318"/>
    <property type="project" value="GO_Central"/>
</dbReference>
<dbReference type="GO" id="GO:0005525">
    <property type="term" value="F:GTP binding"/>
    <property type="evidence" value="ECO:0000304"/>
    <property type="project" value="ProtInc"/>
</dbReference>
<dbReference type="GO" id="GO:0003924">
    <property type="term" value="F:GTPase activity"/>
    <property type="evidence" value="ECO:0000318"/>
    <property type="project" value="GO_Central"/>
</dbReference>
<dbReference type="GO" id="GO:0042802">
    <property type="term" value="F:identical protein binding"/>
    <property type="evidence" value="ECO:0000353"/>
    <property type="project" value="IntAct"/>
</dbReference>
<dbReference type="GO" id="GO:0008017">
    <property type="term" value="F:microtubule binding"/>
    <property type="evidence" value="ECO:0000318"/>
    <property type="project" value="GO_Central"/>
</dbReference>
<dbReference type="GO" id="GO:0140374">
    <property type="term" value="P:antiviral innate immune response"/>
    <property type="evidence" value="ECO:0000270"/>
    <property type="project" value="ARUK-UCL"/>
</dbReference>
<dbReference type="GO" id="GO:0006915">
    <property type="term" value="P:apoptotic process"/>
    <property type="evidence" value="ECO:0000304"/>
    <property type="project" value="ProtInc"/>
</dbReference>
<dbReference type="GO" id="GO:0006952">
    <property type="term" value="P:defense response"/>
    <property type="evidence" value="ECO:0000304"/>
    <property type="project" value="ProtInc"/>
</dbReference>
<dbReference type="GO" id="GO:0051607">
    <property type="term" value="P:defense response to virus"/>
    <property type="evidence" value="ECO:0000314"/>
    <property type="project" value="UniProtKB"/>
</dbReference>
<dbReference type="GO" id="GO:0045087">
    <property type="term" value="P:innate immune response"/>
    <property type="evidence" value="ECO:0000304"/>
    <property type="project" value="UniProtKB"/>
</dbReference>
<dbReference type="GO" id="GO:0070106">
    <property type="term" value="P:interleukin-27-mediated signaling pathway"/>
    <property type="evidence" value="ECO:0000270"/>
    <property type="project" value="ARUK-UCL"/>
</dbReference>
<dbReference type="GO" id="GO:0045071">
    <property type="term" value="P:negative regulation of viral genome replication"/>
    <property type="evidence" value="ECO:0000314"/>
    <property type="project" value="UniProtKB"/>
</dbReference>
<dbReference type="GO" id="GO:0031623">
    <property type="term" value="P:receptor internalization"/>
    <property type="evidence" value="ECO:0000318"/>
    <property type="project" value="GO_Central"/>
</dbReference>
<dbReference type="GO" id="GO:0034340">
    <property type="term" value="P:response to type I interferon"/>
    <property type="evidence" value="ECO:0000304"/>
    <property type="project" value="UniProtKB"/>
</dbReference>
<dbReference type="GO" id="GO:0009615">
    <property type="term" value="P:response to virus"/>
    <property type="evidence" value="ECO:0000315"/>
    <property type="project" value="UniProtKB"/>
</dbReference>
<dbReference type="GO" id="GO:0007165">
    <property type="term" value="P:signal transduction"/>
    <property type="evidence" value="ECO:0000304"/>
    <property type="project" value="ProtInc"/>
</dbReference>
<dbReference type="GO" id="GO:0016185">
    <property type="term" value="P:synaptic vesicle budding from presynaptic endocytic zone membrane"/>
    <property type="evidence" value="ECO:0000318"/>
    <property type="project" value="GO_Central"/>
</dbReference>
<dbReference type="CDD" id="cd08771">
    <property type="entry name" value="DLP_1"/>
    <property type="match status" value="1"/>
</dbReference>
<dbReference type="DisProt" id="DP01239"/>
<dbReference type="FunFam" id="1.20.120.1240:FF:000007">
    <property type="entry name" value="Interferon-induced GTP-binding protein Mx1"/>
    <property type="match status" value="1"/>
</dbReference>
<dbReference type="FunFam" id="3.40.50.300:FF:000621">
    <property type="entry name" value="Interferon-induced GTP-binding protein Mx1"/>
    <property type="match status" value="1"/>
</dbReference>
<dbReference type="Gene3D" id="1.20.120.1240">
    <property type="entry name" value="Dynamin, middle domain"/>
    <property type="match status" value="1"/>
</dbReference>
<dbReference type="Gene3D" id="3.40.50.300">
    <property type="entry name" value="P-loop containing nucleotide triphosphate hydrolases"/>
    <property type="match status" value="1"/>
</dbReference>
<dbReference type="InterPro" id="IPR022812">
    <property type="entry name" value="Dynamin"/>
</dbReference>
<dbReference type="InterPro" id="IPR001401">
    <property type="entry name" value="Dynamin_GTPase"/>
</dbReference>
<dbReference type="InterPro" id="IPR019762">
    <property type="entry name" value="Dynamin_GTPase_CS"/>
</dbReference>
<dbReference type="InterPro" id="IPR045063">
    <property type="entry name" value="Dynamin_N"/>
</dbReference>
<dbReference type="InterPro" id="IPR000375">
    <property type="entry name" value="Dynamin_stalk"/>
</dbReference>
<dbReference type="InterPro" id="IPR030381">
    <property type="entry name" value="G_DYNAMIN_dom"/>
</dbReference>
<dbReference type="InterPro" id="IPR003130">
    <property type="entry name" value="GED"/>
</dbReference>
<dbReference type="InterPro" id="IPR020850">
    <property type="entry name" value="GED_dom"/>
</dbReference>
<dbReference type="InterPro" id="IPR027417">
    <property type="entry name" value="P-loop_NTPase"/>
</dbReference>
<dbReference type="PANTHER" id="PTHR11566">
    <property type="entry name" value="DYNAMIN"/>
    <property type="match status" value="1"/>
</dbReference>
<dbReference type="PANTHER" id="PTHR11566:SF217">
    <property type="entry name" value="INTERFERON-INDUCED GTP-BINDING PROTEIN MX1"/>
    <property type="match status" value="1"/>
</dbReference>
<dbReference type="Pfam" id="PF01031">
    <property type="entry name" value="Dynamin_M"/>
    <property type="match status" value="1"/>
</dbReference>
<dbReference type="Pfam" id="PF00350">
    <property type="entry name" value="Dynamin_N"/>
    <property type="match status" value="1"/>
</dbReference>
<dbReference type="Pfam" id="PF02212">
    <property type="entry name" value="GED"/>
    <property type="match status" value="1"/>
</dbReference>
<dbReference type="PRINTS" id="PR00195">
    <property type="entry name" value="DYNAMIN"/>
</dbReference>
<dbReference type="SMART" id="SM00053">
    <property type="entry name" value="DYNc"/>
    <property type="match status" value="1"/>
</dbReference>
<dbReference type="SMART" id="SM00302">
    <property type="entry name" value="GED"/>
    <property type="match status" value="1"/>
</dbReference>
<dbReference type="SUPFAM" id="SSF52540">
    <property type="entry name" value="P-loop containing nucleoside triphosphate hydrolases"/>
    <property type="match status" value="1"/>
</dbReference>
<dbReference type="PROSITE" id="PS00410">
    <property type="entry name" value="G_DYNAMIN_1"/>
    <property type="match status" value="1"/>
</dbReference>
<dbReference type="PROSITE" id="PS51718">
    <property type="entry name" value="G_DYNAMIN_2"/>
    <property type="match status" value="1"/>
</dbReference>
<dbReference type="PROSITE" id="PS51388">
    <property type="entry name" value="GED"/>
    <property type="match status" value="1"/>
</dbReference>
<feature type="chain" id="PRO_0000382943" description="Interferon-induced GTP-binding protein Mx1">
    <location>
        <begin position="1"/>
        <end position="662"/>
    </location>
</feature>
<feature type="initiator methionine" description="Removed; alternate" evidence="31 35">
    <location>
        <position position="1"/>
    </location>
</feature>
<feature type="chain" id="PRO_0000206592" description="Interferon-induced GTP-binding protein Mx1, N-terminally processed">
    <location>
        <begin position="2"/>
        <end position="662"/>
    </location>
</feature>
<feature type="domain" description="Dynamin-type G" evidence="4">
    <location>
        <begin position="67"/>
        <end position="340"/>
    </location>
</feature>
<feature type="domain" description="GED" evidence="3">
    <location>
        <begin position="574"/>
        <end position="662"/>
    </location>
</feature>
<feature type="region of interest" description="G1 motif" evidence="4">
    <location>
        <begin position="77"/>
        <end position="84"/>
    </location>
</feature>
<feature type="region of interest" description="G2 motif" evidence="4">
    <location>
        <begin position="102"/>
        <end position="104"/>
    </location>
</feature>
<feature type="region of interest" description="G3 motif" evidence="4">
    <location>
        <begin position="178"/>
        <end position="181"/>
    </location>
</feature>
<feature type="region of interest" description="G4 motif" evidence="4">
    <location>
        <begin position="247"/>
        <end position="250"/>
    </location>
</feature>
<feature type="region of interest" description="G5 motif" evidence="4">
    <location>
        <begin position="279"/>
        <end position="282"/>
    </location>
</feature>
<feature type="region of interest" description="Bundle signaling element (BSE)">
    <location>
        <begin position="341"/>
        <end position="366"/>
    </location>
</feature>
<feature type="region of interest" description="Middle domain">
    <location>
        <begin position="366"/>
        <end position="533"/>
    </location>
</feature>
<feature type="region of interest" description="Stalk">
    <location>
        <begin position="367"/>
        <end position="632"/>
    </location>
</feature>
<feature type="region of interest" description="Critical for lipid-binding">
    <location>
        <begin position="554"/>
        <end position="557"/>
    </location>
</feature>
<feature type="binding site" evidence="2">
    <location>
        <begin position="77"/>
        <end position="84"/>
    </location>
    <ligand>
        <name>GTP</name>
        <dbReference type="ChEBI" id="CHEBI:37565"/>
    </ligand>
</feature>
<feature type="binding site" evidence="2">
    <location>
        <begin position="178"/>
        <end position="182"/>
    </location>
    <ligand>
        <name>GTP</name>
        <dbReference type="ChEBI" id="CHEBI:37565"/>
    </ligand>
</feature>
<feature type="binding site" evidence="2">
    <location>
        <begin position="247"/>
        <end position="250"/>
    </location>
    <ligand>
        <name>GTP</name>
        <dbReference type="ChEBI" id="CHEBI:37565"/>
    </ligand>
</feature>
<feature type="modified residue" description="N-acetylmethionine; in Interferon-induced GTP-binding protein Mx1; alternate" evidence="36">
    <location>
        <position position="1"/>
    </location>
</feature>
<feature type="splice variant" id="VSP_042904" description="In isoform 2." evidence="37">
    <original>GHKILSRKIQKFENQYRGRELPGFVNYRTFETIVKQQIKALEEPAVDMLHTVTDMVRLAFTDVSIKNFEEFFNLHRTAKSKIEDIRAEQEREGEKLIRLHFQMEQIVYCQDQVYRGALQKVREKELEEEKKKKSWDFGAFQSSSATDSSMEEIFQHLMAYHQEASKRISSHIPLIIQFFMLQTYGQQLQKAMLQLLQDKDTYSWLLKERSDTSDKRKFLKERLARLTQARRRLAQFPG</original>
    <variation>GGQQAHLQPHPFDHPVLHAPDVRPAASEGHAAAPAGQGHLQLAPEGAERHQRQAEVPEGAACTADAGSAPACPVPRLTTLCPAP</variation>
    <location>
        <begin position="425"/>
        <end position="662"/>
    </location>
</feature>
<feature type="sequence variant" id="VAR_058010" description="In dbSNP:rs469390." evidence="5 6 9 13 25 30">
    <original>V</original>
    <variation>I</variation>
    <location>
        <position position="379"/>
    </location>
</feature>
<feature type="sequence variant" id="VAR_034116" description="In dbSNP:rs34717738.">
    <original>A</original>
    <variation>V</variation>
    <location>
        <position position="381"/>
    </location>
</feature>
<feature type="sequence variant" id="VAR_034117" description="In dbSNP:rs2230454.">
    <original>Q</original>
    <variation>H</variation>
    <location>
        <position position="611"/>
    </location>
</feature>
<feature type="mutagenesis site" description="No effect on GTP-binding, nor on viral infection." evidence="32">
    <original>S</original>
    <variation>C</variation>
    <location>
        <position position="81"/>
    </location>
</feature>
<feature type="mutagenesis site" description="Loss of GTP-binding. Loss of potentiation of TRPC6 activity. Loss of protection against viral infection." evidence="14 32">
    <original>K</original>
    <variation>A</variation>
    <location>
        <position position="83"/>
    </location>
</feature>
<feature type="mutagenesis site" description="Loss of GTP-binding. Loss of protection against viral infection." evidence="14 32">
    <original>K</original>
    <variation>M</variation>
    <location>
        <position position="83"/>
    </location>
</feature>
<feature type="mutagenesis site" description="Loss of GTP-binding. Loss of potentiation of TRPC6 activity. Loss of protection against viral infection." evidence="14 33">
    <original>T</original>
    <variation>A</variation>
    <location>
        <position position="103"/>
    </location>
</feature>
<feature type="mutagenesis site" description="Strong liposome-binding reduction." evidence="27">
    <original>K</original>
    <variation>E</variation>
    <location>
        <position position="554"/>
    </location>
</feature>
<feature type="mutagenesis site" description="Strong liposome-binding reduction." evidence="27">
    <original>K</original>
    <variation>E</variation>
    <location>
        <position position="555"/>
    </location>
</feature>
<feature type="mutagenesis site" description="Strong liposome-binding reduction." evidence="27">
    <original>K</original>
    <variation>E</variation>
    <location>
        <position position="556"/>
    </location>
</feature>
<feature type="mutagenesis site" description="Strong liposome-binding reduction." evidence="27">
    <original>K</original>
    <variation>E</variation>
    <location>
        <position position="557"/>
    </location>
</feature>
<feature type="mutagenesis site" description="Loss of GTP-hydrolysis. No effect on GTP-binding, nor on potentiation of TRPC6 activity." evidence="14">
    <original>L</original>
    <variation>K</variation>
    <location>
        <position position="612"/>
    </location>
</feature>
<feature type="mutagenesis site" description="Reduced antiviral activity." evidence="28">
    <original>E</original>
    <variation>A</variation>
    <location>
        <position position="632"/>
    </location>
</feature>
<feature type="mutagenesis site" description="Fails to sequester viral nucleoproteins, no antiviral activity." evidence="28">
    <original>R</original>
    <variation>A</variation>
    <location>
        <position position="640"/>
    </location>
</feature>
<feature type="mutagenesis site" description="Loss of antiviral activity towards CCHFV and LACV." evidence="7 11">
    <original>E</original>
    <variation>R</variation>
    <location>
        <position position="645"/>
    </location>
</feature>
<feature type="sequence conflict" description="In Ref. 1; AAA36337." evidence="38" ref="1">
    <original>L</original>
    <variation>R</variation>
    <location>
        <position position="164"/>
    </location>
</feature>
<feature type="sequence conflict" description="In Ref. 4; BAG53272." evidence="38" ref="4">
    <original>D</original>
    <variation>G</variation>
    <location>
        <position position="250"/>
    </location>
</feature>
<feature type="sequence conflict" description="In Ref. 4; BAG37852." evidence="38" ref="4">
    <original>Q</original>
    <variation>H</variation>
    <location>
        <position position="297"/>
    </location>
</feature>
<feature type="sequence conflict" description="In Ref. 4; BAG53272." evidence="38" ref="4">
    <original>E</original>
    <variation>G</variation>
    <location>
        <position position="299"/>
    </location>
</feature>
<feature type="sequence conflict" description="In Ref. 4; BAG37852." evidence="38" ref="4">
    <original>M</original>
    <variation>I</variation>
    <location>
        <position position="582"/>
    </location>
</feature>
<feature type="turn" evidence="42">
    <location>
        <begin position="47"/>
        <end position="49"/>
    </location>
</feature>
<feature type="helix" evidence="42">
    <location>
        <begin position="50"/>
        <end position="61"/>
    </location>
</feature>
<feature type="helix" evidence="42">
    <location>
        <begin position="64"/>
        <end position="66"/>
    </location>
</feature>
<feature type="strand" evidence="42">
    <location>
        <begin position="72"/>
        <end position="78"/>
    </location>
</feature>
<feature type="helix" evidence="42">
    <location>
        <begin position="83"/>
        <end position="91"/>
    </location>
</feature>
<feature type="strand" evidence="41">
    <location>
        <begin position="99"/>
        <end position="101"/>
    </location>
</feature>
<feature type="strand" evidence="42">
    <location>
        <begin position="107"/>
        <end position="113"/>
    </location>
</feature>
<feature type="strand" evidence="41">
    <location>
        <begin position="115"/>
        <end position="117"/>
    </location>
</feature>
<feature type="strand" evidence="42">
    <location>
        <begin position="121"/>
        <end position="126"/>
    </location>
</feature>
<feature type="strand" evidence="42">
    <location>
        <begin position="129"/>
        <end position="133"/>
    </location>
</feature>
<feature type="helix" evidence="42">
    <location>
        <begin position="136"/>
        <end position="138"/>
    </location>
</feature>
<feature type="helix" evidence="42">
    <location>
        <begin position="139"/>
        <end position="150"/>
    </location>
</feature>
<feature type="strand" evidence="41">
    <location>
        <begin position="153"/>
        <end position="155"/>
    </location>
</feature>
<feature type="strand" evidence="42">
    <location>
        <begin position="162"/>
        <end position="168"/>
    </location>
</feature>
<feature type="strand" evidence="42">
    <location>
        <begin position="173"/>
        <end position="178"/>
    </location>
</feature>
<feature type="helix" evidence="42">
    <location>
        <begin position="194"/>
        <end position="206"/>
    </location>
</feature>
<feature type="strand" evidence="40">
    <location>
        <begin position="208"/>
        <end position="210"/>
    </location>
</feature>
<feature type="strand" evidence="42">
    <location>
        <begin position="211"/>
        <end position="218"/>
    </location>
</feature>
<feature type="helix" evidence="42">
    <location>
        <begin position="223"/>
        <end position="225"/>
    </location>
</feature>
<feature type="helix" evidence="42">
    <location>
        <begin position="227"/>
        <end position="235"/>
    </location>
</feature>
<feature type="strand" evidence="42">
    <location>
        <begin position="240"/>
        <end position="247"/>
    </location>
</feature>
<feature type="helix" evidence="42">
    <location>
        <begin position="249"/>
        <end position="251"/>
    </location>
</feature>
<feature type="strand" evidence="40">
    <location>
        <begin position="252"/>
        <end position="256"/>
    </location>
</feature>
<feature type="helix" evidence="42">
    <location>
        <begin position="257"/>
        <end position="264"/>
    </location>
</feature>
<feature type="strand" evidence="42">
    <location>
        <begin position="267"/>
        <end position="269"/>
    </location>
</feature>
<feature type="strand" evidence="42">
    <location>
        <begin position="275"/>
        <end position="277"/>
    </location>
</feature>
<feature type="helix" evidence="42">
    <location>
        <begin position="283"/>
        <end position="287"/>
    </location>
</feature>
<feature type="helix" evidence="42">
    <location>
        <begin position="292"/>
        <end position="304"/>
    </location>
</feature>
<feature type="turn" evidence="42">
    <location>
        <begin position="307"/>
        <end position="309"/>
    </location>
</feature>
<feature type="helix" evidence="42">
    <location>
        <begin position="310"/>
        <end position="314"/>
    </location>
</feature>
<feature type="helix" evidence="42">
    <location>
        <begin position="320"/>
        <end position="338"/>
    </location>
</feature>
<feature type="turn" evidence="42">
    <location>
        <begin position="339"/>
        <end position="341"/>
    </location>
</feature>
<feature type="helix" evidence="42">
    <location>
        <begin position="342"/>
        <end position="358"/>
    </location>
</feature>
<feature type="helix" evidence="42">
    <location>
        <begin position="367"/>
        <end position="390"/>
    </location>
</feature>
<feature type="helix" evidence="39">
    <location>
        <begin position="403"/>
        <end position="437"/>
    </location>
</feature>
<feature type="strand" evidence="40">
    <location>
        <begin position="444"/>
        <end position="446"/>
    </location>
</feature>
<feature type="helix" evidence="39">
    <location>
        <begin position="451"/>
        <end position="463"/>
    </location>
</feature>
<feature type="helix" evidence="39">
    <location>
        <begin position="466"/>
        <end position="492"/>
    </location>
</feature>
<feature type="strand" evidence="43">
    <location>
        <begin position="493"/>
        <end position="495"/>
    </location>
</feature>
<feature type="helix" evidence="39">
    <location>
        <begin position="496"/>
        <end position="528"/>
    </location>
</feature>
<feature type="helix" evidence="39">
    <location>
        <begin position="574"/>
        <end position="604"/>
    </location>
</feature>
<feature type="helix" evidence="39">
    <location>
        <begin position="606"/>
        <end position="618"/>
    </location>
</feature>
<feature type="helix" evidence="39">
    <location>
        <begin position="623"/>
        <end position="625"/>
    </location>
</feature>
<feature type="helix" evidence="39">
    <location>
        <begin position="626"/>
        <end position="629"/>
    </location>
</feature>
<feature type="helix" evidence="43">
    <location>
        <begin position="634"/>
        <end position="659"/>
    </location>
</feature>
<name>MX1_HUMAN</name>
<reference key="1">
    <citation type="journal article" date="1989" name="Mol. Cell. Biol.">
        <title>cDNA structures and regulation of two interferon-induced human Mx proteins.</title>
        <authorList>
            <person name="Aebi M."/>
            <person name="Faeh J."/>
            <person name="Hurt N."/>
            <person name="Samuel C.E."/>
            <person name="Thomis D."/>
            <person name="Bazzigher L."/>
            <person name="Pavlovic J."/>
            <person name="Haller O."/>
            <person name="Staeheli P."/>
        </authorList>
    </citation>
    <scope>NUCLEOTIDE SEQUENCE [MRNA] (ISOFORM 1)</scope>
    <scope>VARIANT ILE-379</scope>
</reference>
<reference key="2">
    <citation type="journal article" date="1990" name="J. Virol.">
        <title>Cloning and sequence analyses of cDNAs for interferon- and virus-induced human Mx proteins reveal that they contain putative guanine nucleotide-binding sites: functional study of the corresponding gene promoter.</title>
        <authorList>
            <person name="Horisberger M.A."/>
            <person name="McMaster G.K."/>
            <person name="Zeller H."/>
            <person name="Wathelet M.G."/>
            <person name="Dellis J."/>
            <person name="Content J."/>
        </authorList>
    </citation>
    <scope>NUCLEOTIDE SEQUENCE [MRNA] (ISOFORM 1)</scope>
    <scope>VARIANT ILE-379</scope>
</reference>
<reference key="3">
    <citation type="journal article" date="2000" name="Hum. Genet.">
        <title>Structure and polymorphism of the human gene for the interferon-induced p78 protein (MX1): evidence of association with alopecia areata in the Down syndrome region.</title>
        <authorList>
            <person name="Tazi-Ahnini R."/>
            <person name="di Giovine F.S."/>
            <person name="McDonagh A.J."/>
            <person name="Messenger A.G."/>
            <person name="Amadou C."/>
            <person name="Cox A."/>
            <person name="Duff G.W."/>
            <person name="Cork M.J."/>
        </authorList>
    </citation>
    <scope>NUCLEOTIDE SEQUENCE [GENOMIC DNA]</scope>
    <scope>VARIANT ILE-379</scope>
    <scope>POSSIBLE INVOLVEMENT IN ALLOPECIA AREATA</scope>
</reference>
<reference key="4">
    <citation type="journal article" date="2011" name="Immunol. Cell Biol.">
        <title>Herpes simplex virus-1 induces expression of a novel MxA isoform that enhances viral replication.</title>
        <authorList>
            <person name="Ku C.C."/>
            <person name="Che X.B."/>
            <person name="Reichelt M."/>
            <person name="Rajamani J."/>
            <person name="Schaap-Nutt A."/>
            <person name="Huang K.J."/>
            <person name="Sommer M.H."/>
            <person name="Chen Y.S."/>
            <person name="Chen Y.Y."/>
            <person name="Arvin A.M."/>
        </authorList>
    </citation>
    <scope>NUCLEOTIDE SEQUENCE [MRNA] (ISOFORM 2)</scope>
    <scope>FUNCTION (ISOFORMS 1 AND 2)</scope>
    <scope>SUBCELLULAR LOCATION (ISOFORM 2)</scope>
    <scope>ALTERNATIVE SPLICING</scope>
</reference>
<reference key="5">
    <citation type="journal article" date="2004" name="Nat. Genet.">
        <title>Complete sequencing and characterization of 21,243 full-length human cDNAs.</title>
        <authorList>
            <person name="Ota T."/>
            <person name="Suzuki Y."/>
            <person name="Nishikawa T."/>
            <person name="Otsuki T."/>
            <person name="Sugiyama T."/>
            <person name="Irie R."/>
            <person name="Wakamatsu A."/>
            <person name="Hayashi K."/>
            <person name="Sato H."/>
            <person name="Nagai K."/>
            <person name="Kimura K."/>
            <person name="Makita H."/>
            <person name="Sekine M."/>
            <person name="Obayashi M."/>
            <person name="Nishi T."/>
            <person name="Shibahara T."/>
            <person name="Tanaka T."/>
            <person name="Ishii S."/>
            <person name="Yamamoto J."/>
            <person name="Saito K."/>
            <person name="Kawai Y."/>
            <person name="Isono Y."/>
            <person name="Nakamura Y."/>
            <person name="Nagahari K."/>
            <person name="Murakami K."/>
            <person name="Yasuda T."/>
            <person name="Iwayanagi T."/>
            <person name="Wagatsuma M."/>
            <person name="Shiratori A."/>
            <person name="Sudo H."/>
            <person name="Hosoiri T."/>
            <person name="Kaku Y."/>
            <person name="Kodaira H."/>
            <person name="Kondo H."/>
            <person name="Sugawara M."/>
            <person name="Takahashi M."/>
            <person name="Kanda K."/>
            <person name="Yokoi T."/>
            <person name="Furuya T."/>
            <person name="Kikkawa E."/>
            <person name="Omura Y."/>
            <person name="Abe K."/>
            <person name="Kamihara K."/>
            <person name="Katsuta N."/>
            <person name="Sato K."/>
            <person name="Tanikawa M."/>
            <person name="Yamazaki M."/>
            <person name="Ninomiya K."/>
            <person name="Ishibashi T."/>
            <person name="Yamashita H."/>
            <person name="Murakawa K."/>
            <person name="Fujimori K."/>
            <person name="Tanai H."/>
            <person name="Kimata M."/>
            <person name="Watanabe M."/>
            <person name="Hiraoka S."/>
            <person name="Chiba Y."/>
            <person name="Ishida S."/>
            <person name="Ono Y."/>
            <person name="Takiguchi S."/>
            <person name="Watanabe S."/>
            <person name="Yosida M."/>
            <person name="Hotuta T."/>
            <person name="Kusano J."/>
            <person name="Kanehori K."/>
            <person name="Takahashi-Fujii A."/>
            <person name="Hara H."/>
            <person name="Tanase T.-O."/>
            <person name="Nomura Y."/>
            <person name="Togiya S."/>
            <person name="Komai F."/>
            <person name="Hara R."/>
            <person name="Takeuchi K."/>
            <person name="Arita M."/>
            <person name="Imose N."/>
            <person name="Musashino K."/>
            <person name="Yuuki H."/>
            <person name="Oshima A."/>
            <person name="Sasaki N."/>
            <person name="Aotsuka S."/>
            <person name="Yoshikawa Y."/>
            <person name="Matsunawa H."/>
            <person name="Ichihara T."/>
            <person name="Shiohata N."/>
            <person name="Sano S."/>
            <person name="Moriya S."/>
            <person name="Momiyama H."/>
            <person name="Satoh N."/>
            <person name="Takami S."/>
            <person name="Terashima Y."/>
            <person name="Suzuki O."/>
            <person name="Nakagawa S."/>
            <person name="Senoh A."/>
            <person name="Mizoguchi H."/>
            <person name="Goto Y."/>
            <person name="Shimizu F."/>
            <person name="Wakebe H."/>
            <person name="Hishigaki H."/>
            <person name="Watanabe T."/>
            <person name="Sugiyama A."/>
            <person name="Takemoto M."/>
            <person name="Kawakami B."/>
            <person name="Yamazaki M."/>
            <person name="Watanabe K."/>
            <person name="Kumagai A."/>
            <person name="Itakura S."/>
            <person name="Fukuzumi Y."/>
            <person name="Fujimori Y."/>
            <person name="Komiyama M."/>
            <person name="Tashiro H."/>
            <person name="Tanigami A."/>
            <person name="Fujiwara T."/>
            <person name="Ono T."/>
            <person name="Yamada K."/>
            <person name="Fujii Y."/>
            <person name="Ozaki K."/>
            <person name="Hirao M."/>
            <person name="Ohmori Y."/>
            <person name="Kawabata A."/>
            <person name="Hikiji T."/>
            <person name="Kobatake N."/>
            <person name="Inagaki H."/>
            <person name="Ikema Y."/>
            <person name="Okamoto S."/>
            <person name="Okitani R."/>
            <person name="Kawakami T."/>
            <person name="Noguchi S."/>
            <person name="Itoh T."/>
            <person name="Shigeta K."/>
            <person name="Senba T."/>
            <person name="Matsumura K."/>
            <person name="Nakajima Y."/>
            <person name="Mizuno T."/>
            <person name="Morinaga M."/>
            <person name="Sasaki M."/>
            <person name="Togashi T."/>
            <person name="Oyama M."/>
            <person name="Hata H."/>
            <person name="Watanabe M."/>
            <person name="Komatsu T."/>
            <person name="Mizushima-Sugano J."/>
            <person name="Satoh T."/>
            <person name="Shirai Y."/>
            <person name="Takahashi Y."/>
            <person name="Nakagawa K."/>
            <person name="Okumura K."/>
            <person name="Nagase T."/>
            <person name="Nomura N."/>
            <person name="Kikuchi H."/>
            <person name="Masuho Y."/>
            <person name="Yamashita R."/>
            <person name="Nakai K."/>
            <person name="Yada T."/>
            <person name="Nakamura Y."/>
            <person name="Ohara O."/>
            <person name="Isogai T."/>
            <person name="Sugano S."/>
        </authorList>
    </citation>
    <scope>NUCLEOTIDE SEQUENCE [LARGE SCALE MRNA] (ISOFORM 1)</scope>
    <scope>VARIANT ILE-379</scope>
</reference>
<reference key="6">
    <citation type="journal article" date="2000" name="Nature">
        <title>The DNA sequence of human chromosome 21.</title>
        <authorList>
            <person name="Hattori M."/>
            <person name="Fujiyama A."/>
            <person name="Taylor T.D."/>
            <person name="Watanabe H."/>
            <person name="Yada T."/>
            <person name="Park H.-S."/>
            <person name="Toyoda A."/>
            <person name="Ishii K."/>
            <person name="Totoki Y."/>
            <person name="Choi D.-K."/>
            <person name="Groner Y."/>
            <person name="Soeda E."/>
            <person name="Ohki M."/>
            <person name="Takagi T."/>
            <person name="Sakaki Y."/>
            <person name="Taudien S."/>
            <person name="Blechschmidt K."/>
            <person name="Polley A."/>
            <person name="Menzel U."/>
            <person name="Delabar J."/>
            <person name="Kumpf K."/>
            <person name="Lehmann R."/>
            <person name="Patterson D."/>
            <person name="Reichwald K."/>
            <person name="Rump A."/>
            <person name="Schillhabel M."/>
            <person name="Schudy A."/>
            <person name="Zimmermann W."/>
            <person name="Rosenthal A."/>
            <person name="Kudoh J."/>
            <person name="Shibuya K."/>
            <person name="Kawasaki K."/>
            <person name="Asakawa S."/>
            <person name="Shintani A."/>
            <person name="Sasaki T."/>
            <person name="Nagamine K."/>
            <person name="Mitsuyama S."/>
            <person name="Antonarakis S.E."/>
            <person name="Minoshima S."/>
            <person name="Shimizu N."/>
            <person name="Nordsiek G."/>
            <person name="Hornischer K."/>
            <person name="Brandt P."/>
            <person name="Scharfe M."/>
            <person name="Schoen O."/>
            <person name="Desario A."/>
            <person name="Reichelt J."/>
            <person name="Kauer G."/>
            <person name="Bloecker H."/>
            <person name="Ramser J."/>
            <person name="Beck A."/>
            <person name="Klages S."/>
            <person name="Hennig S."/>
            <person name="Riesselmann L."/>
            <person name="Dagand E."/>
            <person name="Wehrmeyer S."/>
            <person name="Borzym K."/>
            <person name="Gardiner K."/>
            <person name="Nizetic D."/>
            <person name="Francis F."/>
            <person name="Lehrach H."/>
            <person name="Reinhardt R."/>
            <person name="Yaspo M.-L."/>
        </authorList>
    </citation>
    <scope>NUCLEOTIDE SEQUENCE [LARGE SCALE GENOMIC DNA]</scope>
    <scope>VARIANT ILE-379</scope>
</reference>
<reference key="7">
    <citation type="submission" date="2005-09" db="EMBL/GenBank/DDBJ databases">
        <authorList>
            <person name="Mural R.J."/>
            <person name="Istrail S."/>
            <person name="Sutton G.G."/>
            <person name="Florea L."/>
            <person name="Halpern A.L."/>
            <person name="Mobarry C.M."/>
            <person name="Lippert R."/>
            <person name="Walenz B."/>
            <person name="Shatkay H."/>
            <person name="Dew I."/>
            <person name="Miller J.R."/>
            <person name="Flanigan M.J."/>
            <person name="Edwards N.J."/>
            <person name="Bolanos R."/>
            <person name="Fasulo D."/>
            <person name="Halldorsson B.V."/>
            <person name="Hannenhalli S."/>
            <person name="Turner R."/>
            <person name="Yooseph S."/>
            <person name="Lu F."/>
            <person name="Nusskern D.R."/>
            <person name="Shue B.C."/>
            <person name="Zheng X.H."/>
            <person name="Zhong F."/>
            <person name="Delcher A.L."/>
            <person name="Huson D.H."/>
            <person name="Kravitz S.A."/>
            <person name="Mouchard L."/>
            <person name="Reinert K."/>
            <person name="Remington K.A."/>
            <person name="Clark A.G."/>
            <person name="Waterman M.S."/>
            <person name="Eichler E.E."/>
            <person name="Adams M.D."/>
            <person name="Hunkapiller M.W."/>
            <person name="Myers E.W."/>
            <person name="Venter J.C."/>
        </authorList>
    </citation>
    <scope>NUCLEOTIDE SEQUENCE [LARGE SCALE GENOMIC DNA]</scope>
</reference>
<reference key="8">
    <citation type="journal article" date="2004" name="Genome Res.">
        <title>The status, quality, and expansion of the NIH full-length cDNA project: the Mammalian Gene Collection (MGC).</title>
        <authorList>
            <consortium name="The MGC Project Team"/>
        </authorList>
    </citation>
    <scope>NUCLEOTIDE SEQUENCE [LARGE SCALE MRNA] (ISOFORM 1)</scope>
    <scope>VARIANT ILE-379</scope>
    <source>
        <tissue>B-cell</tissue>
        <tissue>Uterus</tissue>
    </source>
</reference>
<reference key="9">
    <citation type="submission" date="2009-07" db="UniProtKB">
        <authorList>
            <person name="Bienvenut W.V."/>
            <person name="Gao M."/>
            <person name="Leug H."/>
        </authorList>
    </citation>
    <scope>PROTEIN SEQUENCE OF 1-10; 84-97 AND 442-481</scope>
    <scope>ACETYLATION AT MET-1</scope>
    <scope>IDENTIFICATION BY MASS SPECTROMETRY</scope>
    <source>
        <tissue>Prostatic carcinoma</tissue>
    </source>
</reference>
<reference key="10">
    <citation type="patent" date="1987-10-21" number="EP0242329">
        <title>Interferon-induced human protein in pure form, monoclonal antibodies thereto, and test kits containing these antibodies.</title>
        <authorList>
            <person name="Horisberger M.A."/>
            <person name="Hochkeppel H.K."/>
            <person name="Content J."/>
        </authorList>
    </citation>
    <scope>PROTEIN SEQUENCE OF 2-57</scope>
    <scope>NUCLEOTIDE SEQUENCE OF 2-124</scope>
</reference>
<reference key="11">
    <citation type="journal article" date="1989" name="J. Interferon Res.">
        <title>Purification and characterization of a human Mx protein.</title>
        <authorList>
            <person name="Weitz G."/>
            <person name="Bekisz J."/>
            <person name="Zoon K."/>
            <person name="Arnheiter H."/>
        </authorList>
    </citation>
    <scope>PROTEIN SEQUENCE OF 2-26</scope>
</reference>
<reference key="12">
    <citation type="submission" date="2002-11" db="EMBL/GenBank/DDBJ databases">
        <title>Inf-induced gene expression analysis in MS patients: Loss of bioavailability can be caused by either binding or neutralizing antibodies.</title>
        <authorList>
            <person name="Narayan K."/>
            <person name="Pachner A.R."/>
        </authorList>
    </citation>
    <scope>NUCLEOTIDE SEQUENCE [MRNA] OF 486-569</scope>
</reference>
<reference key="13">
    <citation type="journal article" date="1990" name="J. Virol.">
        <title>Resistance to influenza virus and vesicular stomatitis virus conferred by expression of human MxA protein.</title>
        <authorList>
            <person name="Pavlovic J."/>
            <person name="Zuercher T."/>
            <person name="Haller O."/>
            <person name="Staeheli P."/>
        </authorList>
    </citation>
    <scope>RESISTANCE TO INFLUENZA VIRUS AND VSV</scope>
</reference>
<reference key="14">
    <citation type="journal article" date="1993" name="J. Virol.">
        <title>A functional GTP-binding motif is necessary for antiviral activity of Mx proteins.</title>
        <authorList>
            <person name="Pitossi F."/>
            <person name="Blank A."/>
            <person name="Schroeder A."/>
            <person name="Schwarz A."/>
            <person name="Huessi P."/>
            <person name="Schwemmle M."/>
            <person name="Pavlovic J."/>
            <person name="Staeheli P."/>
        </authorList>
    </citation>
    <scope>MUTAGENESIS OF SER-81 AND LYS-83</scope>
</reference>
<reference key="15">
    <citation type="journal article" date="1997" name="J. Virol.">
        <title>Dominant-negative mutants of human MxA protein: domains in the carboxy-terminal moiety are important for oligomerization and antiviral activity.</title>
        <authorList>
            <person name="Ponten A."/>
            <person name="Sick C."/>
            <person name="Weeber M."/>
            <person name="Haller O."/>
            <person name="Kochs G."/>
        </authorList>
    </citation>
    <scope>SUBCELLULAR LOCATION</scope>
    <scope>MUTAGENESIS OF THR-103</scope>
</reference>
<reference key="16">
    <citation type="journal article" date="1999" name="J. Biol. Chem.">
        <title>GTP-bound human MxA protein interacts with the nucleocapsids of Thogoto virus (Orthomyxoviridae).</title>
        <authorList>
            <person name="Kochs G."/>
            <person name="Haller O."/>
        </authorList>
    </citation>
    <scope>INTERACTION WITH THOV NUCLEOPROTEIN</scope>
</reference>
<reference key="17">
    <citation type="journal article" date="2002" name="Proc. Natl. Acad. Sci. U.S.A.">
        <title>Antivirally active MxA protein sequesters La Crosse virus nucleocapsid protein into perinuclear complexes.</title>
        <authorList>
            <person name="Kochs G."/>
            <person name="Janzen C."/>
            <person name="Hohenberg H."/>
            <person name="Haller O."/>
        </authorList>
    </citation>
    <scope>FUNCTION</scope>
    <scope>SUBCELLULAR LOCATION</scope>
    <scope>INTERACTION WITH LACV PROTEIN N</scope>
    <scope>MUTAGENESIS OF GLU-645</scope>
</reference>
<reference key="18">
    <citation type="journal article" date="2004" name="J. Virol.">
        <title>Human MxA protein inhibits the replication of Crimean-Congo hemorrhagic fever virus.</title>
        <authorList>
            <person name="Andersson I."/>
            <person name="Bladh L."/>
            <person name="Mousavi-Jazi M."/>
            <person name="Magnusson K.E."/>
            <person name="Lundkvist A."/>
            <person name="Haller O."/>
            <person name="Mirazimi A."/>
        </authorList>
    </citation>
    <scope>FUNCTION</scope>
    <scope>SUBCELLULAR LOCATION</scope>
    <scope>INTERACTION WITH CCHFV PROTEIN N</scope>
    <scope>MUTAGENESIS OF GLU-645</scope>
</reference>
<reference key="19">
    <citation type="journal article" date="2004" name="Nucleic Acids Res.">
        <title>Nuclear MxA proteins form a complex with influenza virus NP and inhibit the transcription of the engineered influenza virus genome.</title>
        <authorList>
            <person name="Turan K."/>
            <person name="Mibayashi M."/>
            <person name="Sugiyama K."/>
            <person name="Saito S."/>
            <person name="Numajiri A."/>
            <person name="Nagata K."/>
        </authorList>
    </citation>
    <scope>FUNCTION</scope>
</reference>
<reference key="20">
    <citation type="journal article" date="2004" name="Traffic">
        <title>Missorting of LaCrosse virus nucleocapsid protein by the interferon-induced MxA GTPase involves smooth ER membranes.</title>
        <authorList>
            <person name="Reichelt M."/>
            <person name="Stertz S."/>
            <person name="Krijnse-Locker J."/>
            <person name="Haller O."/>
            <person name="Kochs G."/>
        </authorList>
    </citation>
    <scope>FUNCTION</scope>
    <scope>SUBCELLULAR LOCATION</scope>
</reference>
<reference key="21">
    <citation type="journal article" date="2004" name="Virus Res.">
        <title>Inhibition of Dugbe nairovirus replication by human MxA protein.</title>
        <authorList>
            <person name="Bridgen A."/>
            <person name="Dalrymple D.A."/>
            <person name="Weber F."/>
            <person name="Elliott R.M."/>
        </authorList>
    </citation>
    <scope>FUNCTION</scope>
</reference>
<reference key="22">
    <citation type="journal article" date="2005" name="J. Biol. Chem.">
        <title>MxA, a member of the dynamin superfamily, interacts with the ankyrin-like repeat domain of TRPC.</title>
        <authorList>
            <person name="Lussier M.P."/>
            <person name="Cayouette S."/>
            <person name="Lepage P.K."/>
            <person name="Bernier C.L."/>
            <person name="Francoeur N."/>
            <person name="St-Hilaire M."/>
            <person name="Pinard M."/>
            <person name="Boulay G."/>
        </authorList>
    </citation>
    <scope>FUNCTION</scope>
    <scope>INTERACTION WITH TRPC1; TRPC3; TRPC4; TRPC5; TRPC6 AND TRPC7</scope>
    <scope>MUTAGENESIS OF LYS-83; THR-103 AND LEU-612</scope>
</reference>
<reference key="23">
    <citation type="journal article" date="2005" name="Methods Enzymol.">
        <title>Assay and functional analysis of dynamin-like Mx proteins.</title>
        <authorList>
            <person name="Kochs G."/>
            <person name="Reichelt M."/>
            <person name="Danino D."/>
            <person name="Hinshaw J.E."/>
            <person name="Haller O."/>
        </authorList>
    </citation>
    <scope>FUNCTION</scope>
    <scope>SUBCELLULAR LOCATION</scope>
    <scope>OLIGOMERIZATION</scope>
    <scope>INTERACTION WITH LACV PROTEIN N</scope>
</reference>
<reference key="24">
    <citation type="journal article" date="2005" name="Proc. Natl. Acad. Sci. U.S.A.">
        <title>Human ISG15 conjugation targets both IFN-induced and constitutively expressed proteins functioning in diverse cellular pathways.</title>
        <authorList>
            <person name="Zhao C."/>
            <person name="Denison C."/>
            <person name="Huibregtse J.M."/>
            <person name="Gygi S.P."/>
            <person name="Krug R.M."/>
        </authorList>
    </citation>
    <scope>ISGYLATION</scope>
</reference>
<reference key="25">
    <citation type="journal article" date="2006" name="J. Interferon Cytokine Res.">
        <title>Interferon-induced, antiviral human MxA protein localizes to a distinct subcompartment of the smooth endoplasmic reticulum.</title>
        <authorList>
            <person name="Stertz S."/>
            <person name="Reichelt M."/>
            <person name="Krijnse-Locker J."/>
            <person name="Mackenzie J."/>
            <person name="Simpson J.C."/>
            <person name="Haller O."/>
            <person name="Kochs G."/>
        </authorList>
    </citation>
    <scope>SUBCELLULAR LOCATION</scope>
</reference>
<reference key="26">
    <citation type="journal article" date="2006" name="Neurobiol. Dis.">
        <title>Expression of the interferon-alpha/beta-inducible bovine Mx1 dynamin interferes with replication of rabies virus.</title>
        <authorList>
            <person name="Leroy M."/>
            <person name="Pire G."/>
            <person name="Baise E."/>
            <person name="Desmecht D."/>
        </authorList>
    </citation>
    <scope>FUNCTION</scope>
</reference>
<reference key="27">
    <citation type="journal article" date="2007" name="J. Gen. Virol.">
        <title>Human MxA protein confers resistance to double-stranded RNA viruses of two virus families.</title>
        <authorList>
            <person name="Mundt E."/>
        </authorList>
    </citation>
    <scope>FUNCTION</scope>
</reference>
<reference key="28">
    <citation type="journal article" date="2007" name="Microbes Infect.">
        <title>The Mx GTPase family of interferon-induced antiviral proteins.</title>
        <authorList>
            <person name="Haller O."/>
            <person name="Stertz S."/>
            <person name="Kochs G."/>
        </authorList>
    </citation>
    <scope>REVIEW</scope>
    <scope>INDUCTION</scope>
</reference>
<reference key="29">
    <citation type="journal article" date="2008" name="Arch. Virol.">
        <title>GTPase activity is not essential for the interferon-inducible MxA protein to inhibit the replication of hepatitis B virus.</title>
        <authorList>
            <person name="Yu Z."/>
            <person name="Wang Z."/>
            <person name="Chen J."/>
            <person name="Li H."/>
            <person name="Lin Z."/>
            <person name="Zhang F."/>
            <person name="Zhou Y."/>
            <person name="Hou J."/>
        </authorList>
    </citation>
    <scope>FUNCTION</scope>
</reference>
<reference key="30">
    <citation type="journal article" date="2009" name="J. Virol.">
        <title>Inhibition of a large double-stranded DNA virus by MxA protein.</title>
        <authorList>
            <person name="Netherton C.L."/>
            <person name="Simpson J."/>
            <person name="Haller O."/>
            <person name="Wileman T.E."/>
            <person name="Takamatsu H.H."/>
            <person name="Monaghan P."/>
            <person name="Taylor G."/>
        </authorList>
    </citation>
    <scope>FUNCTION</scope>
    <scope>SUBCELLULAR LOCATION</scope>
</reference>
<reference key="31">
    <citation type="journal article" date="2010" name="J. Biol. Chem.">
        <title>Dynamin-like MxA GTPase: structural insights into oligomerization and implications for antiviral activity.</title>
        <authorList>
            <person name="Haller O."/>
            <person name="Gao S."/>
            <person name="von der Malsburg A."/>
            <person name="Daumke O."/>
            <person name="Kochs G."/>
        </authorList>
    </citation>
    <scope>REVIEW ON STRUCTURE</scope>
    <scope>DOMAIN GED</scope>
    <scope>DOMAIN MIDDLE</scope>
</reference>
<reference key="32">
    <citation type="journal article" date="2011" name="BMC Syst. Biol.">
        <title>Initial characterization of the human central proteome.</title>
        <authorList>
            <person name="Burkard T.R."/>
            <person name="Planyavsky M."/>
            <person name="Kaupe I."/>
            <person name="Breitwieser F.P."/>
            <person name="Buerckstuemmer T."/>
            <person name="Bennett K.L."/>
            <person name="Superti-Furga G."/>
            <person name="Colinge J."/>
        </authorList>
    </citation>
    <scope>IDENTIFICATION BY MASS SPECTROMETRY [LARGE SCALE ANALYSIS]</scope>
</reference>
<reference key="33">
    <citation type="journal article" date="2011" name="J. Biol. Chem.">
        <title>Interferon-induced antiviral protein MxA interacts with the cellular RNA helicases UAP56 and URH49.</title>
        <authorList>
            <person name="Wisskirchen C."/>
            <person name="Ludersdorfer T.H."/>
            <person name="Mueller D.A."/>
            <person name="Moritz E."/>
            <person name="Pavlovic J."/>
        </authorList>
    </citation>
    <scope>SUBCELLULAR LOCATION</scope>
    <scope>INTERACTION WITH DDX39A AND DDX39B</scope>
</reference>
<reference key="34">
    <citation type="journal article" date="2011" name="J. Biol. Chem.">
        <title>Stalk domain of the dynamin-like MxA GTPase protein mediates membrane binding and liposome tubulation via the unstructured L4 loop.</title>
        <authorList>
            <person name="von der Malsburg A."/>
            <person name="Abutbul-Ionita I."/>
            <person name="Haller O."/>
            <person name="Kochs G."/>
            <person name="Danino D."/>
        </authorList>
    </citation>
    <scope>FUNCTION</scope>
    <scope>SUBUNIT</scope>
    <scope>SUBCELLULAR LOCATION</scope>
    <scope>MUTAGENESIS OF LYS-554; LYS-555; LYS-556 AND LYS-557</scope>
</reference>
<reference key="35">
    <citation type="journal article" date="2011" name="J. Interferon Cytokine Res.">
        <title>Human MxA protein: an interferon-induced dynamin-like GTPase with broad antiviral activity.</title>
        <authorList>
            <person name="Haller O."/>
            <person name="Kochs G."/>
        </authorList>
    </citation>
    <scope>REVIEW</scope>
</reference>
<reference key="36">
    <citation type="journal article" date="2011" name="J. Interferon Cytokine Res.">
        <title>Interferon-inducible antiviral protein MxA enhances cell death triggered by endoplasmic reticulum stress.</title>
        <authorList>
            <person name="Numajiri Haruki A."/>
            <person name="Naito T."/>
            <person name="Nishie T."/>
            <person name="Saito S."/>
            <person name="Nagata K."/>
        </authorList>
    </citation>
    <scope>FUNCTION</scope>
    <scope>SUBCELLULAR LOCATION</scope>
    <scope>INTERACTION WITH HSPA5</scope>
</reference>
<reference key="37">
    <citation type="journal article" date="2015" name="Cell Rep.">
        <title>SUMO-2 orchestrates chromatin modifiers in response to DNA damage.</title>
        <authorList>
            <person name="Hendriks I.A."/>
            <person name="Treffers L.W."/>
            <person name="Verlaan-de Vries M."/>
            <person name="Olsen J.V."/>
            <person name="Vertegaal A.C."/>
        </authorList>
    </citation>
    <scope>IDENTIFICATION BY MASS SPECTROMETRY [LARGE SCALE ANALYSIS]</scope>
</reference>
<reference key="38">
    <citation type="journal article" date="2010" name="Nature">
        <title>Structural basis of oligomerization in the stalk region of dynamin-like MxA.</title>
        <authorList>
            <person name="Gao S."/>
            <person name="von der Malsburg A."/>
            <person name="Paeschke S."/>
            <person name="Behlke J."/>
            <person name="Haller O."/>
            <person name="Kochs G."/>
            <person name="Daumke O."/>
        </authorList>
    </citation>
    <scope>X-RAY CRYSTALLOGRAPHY (2.4 ANGSTROMS) OF 366-636</scope>
    <scope>SUBUNIT</scope>
</reference>
<reference key="39">
    <citation type="journal article" date="2011" name="Immunity">
        <title>Structure of myxovirus resistance protein a reveals intra- and intermolecular domain interactions required for the antiviral function.</title>
        <authorList>
            <person name="Gao S."/>
            <person name="von der Malsburg A."/>
            <person name="Dick A."/>
            <person name="Faelber K."/>
            <person name="Schroder G.F."/>
            <person name="Haller O."/>
            <person name="Kochs G."/>
            <person name="Daumke O."/>
        </authorList>
    </citation>
    <scope>X-RAY CRYSTALLOGRAPHY (3.5 ANGSTROMS) OF 33-662</scope>
    <scope>SUBUNIT</scope>
    <scope>MUTAGENESIS OF GLU-632 AND ARG-640</scope>
</reference>